<reference key="1">
    <citation type="journal article" date="1997" name="Virology">
        <title>The sequence of the Orgyia pseudotsugata multinucleocapsid nuclear polyhedrosis virus genome.</title>
        <authorList>
            <person name="Ahrens C.H."/>
            <person name="Russell R.R."/>
            <person name="Funk C.J."/>
            <person name="Evans J."/>
            <person name="Harwood S."/>
            <person name="Rohrmann G.F."/>
        </authorList>
    </citation>
    <scope>NUCLEOTIDE SEQUENCE [LARGE SCALE GENOMIC DNA]</scope>
</reference>
<protein>
    <recommendedName>
        <fullName>Uncharacterized 6.7 kDa protein</fullName>
    </recommendedName>
</protein>
<feature type="chain" id="PRO_0000133046" description="Uncharacterized 6.7 kDa protein">
    <location>
        <begin position="1"/>
        <end position="56"/>
    </location>
</feature>
<proteinExistence type="predicted"/>
<dbReference type="EMBL" id="U75930">
    <property type="protein sequence ID" value="AAC59110.1"/>
    <property type="molecule type" value="Genomic_DNA"/>
</dbReference>
<dbReference type="RefSeq" id="NP_046267.1">
    <property type="nucleotide sequence ID" value="NC_001875.2"/>
</dbReference>
<dbReference type="SMR" id="O10350"/>
<dbReference type="KEGG" id="vg:912100"/>
<dbReference type="OrthoDB" id="25768at10239"/>
<dbReference type="Proteomes" id="UP000009248">
    <property type="component" value="Genome"/>
</dbReference>
<dbReference type="InterPro" id="IPR009903">
    <property type="entry name" value="AcMNPV_AC110"/>
</dbReference>
<dbReference type="Pfam" id="PF07280">
    <property type="entry name" value="Ac110_PIF"/>
    <property type="match status" value="1"/>
</dbReference>
<organismHost>
    <name type="scientific">Orgyia pseudotsugata</name>
    <name type="common">Douglas-fir tussock moth</name>
    <dbReference type="NCBI Taxonomy" id="33414"/>
</organismHost>
<keyword id="KW-1185">Reference proteome</keyword>
<organism>
    <name type="scientific">Orgyia pseudotsugata multicapsid polyhedrosis virus</name>
    <name type="common">OpMNPV</name>
    <dbReference type="NCBI Taxonomy" id="262177"/>
    <lineage>
        <taxon>Viruses</taxon>
        <taxon>Viruses incertae sedis</taxon>
        <taxon>Naldaviricetes</taxon>
        <taxon>Lefavirales</taxon>
        <taxon>Baculoviridae</taxon>
        <taxon>Alphabaculovirus</taxon>
        <taxon>Alphabaculovirus orpseudotsugatae</taxon>
    </lineage>
</organism>
<gene>
    <name type="ORF">ORF111</name>
</gene>
<name>Y110_NPVOP</name>
<sequence length="56" mass="6683">MKYFLSATFLIIIFLYAIYFCVFIIVNNARVRRNLFYQYNYIPAALLSTVRVHGLK</sequence>
<accession>O10350</accession>